<dbReference type="EMBL" id="CP001048">
    <property type="protein sequence ID" value="ACC90274.1"/>
    <property type="molecule type" value="Genomic_DNA"/>
</dbReference>
<dbReference type="RefSeq" id="WP_002209954.1">
    <property type="nucleotide sequence ID" value="NZ_CP009780.1"/>
</dbReference>
<dbReference type="SMR" id="B2K0R1"/>
<dbReference type="GeneID" id="96662508"/>
<dbReference type="KEGG" id="ypb:YPTS_3319"/>
<dbReference type="PATRIC" id="fig|502801.10.peg.2759"/>
<dbReference type="GO" id="GO:0032153">
    <property type="term" value="C:cell division site"/>
    <property type="evidence" value="ECO:0007669"/>
    <property type="project" value="TreeGrafter"/>
</dbReference>
<dbReference type="GO" id="GO:0030428">
    <property type="term" value="C:cell septum"/>
    <property type="evidence" value="ECO:0007669"/>
    <property type="project" value="TreeGrafter"/>
</dbReference>
<dbReference type="GO" id="GO:0005829">
    <property type="term" value="C:cytosol"/>
    <property type="evidence" value="ECO:0007669"/>
    <property type="project" value="TreeGrafter"/>
</dbReference>
<dbReference type="GO" id="GO:0005886">
    <property type="term" value="C:plasma membrane"/>
    <property type="evidence" value="ECO:0007669"/>
    <property type="project" value="UniProtKB-UniRule"/>
</dbReference>
<dbReference type="GO" id="GO:0000917">
    <property type="term" value="P:division septum assembly"/>
    <property type="evidence" value="ECO:0007669"/>
    <property type="project" value="UniProtKB-KW"/>
</dbReference>
<dbReference type="GO" id="GO:0043093">
    <property type="term" value="P:FtsZ-dependent cytokinesis"/>
    <property type="evidence" value="ECO:0007669"/>
    <property type="project" value="TreeGrafter"/>
</dbReference>
<dbReference type="GO" id="GO:0000921">
    <property type="term" value="P:septin ring assembly"/>
    <property type="evidence" value="ECO:0007669"/>
    <property type="project" value="TreeGrafter"/>
</dbReference>
<dbReference type="FunFam" id="1.20.5.50:FF:000001">
    <property type="entry name" value="Cell division protein ZapA"/>
    <property type="match status" value="1"/>
</dbReference>
<dbReference type="FunFam" id="3.30.160.880:FF:000001">
    <property type="entry name" value="Cell division protein ZapA"/>
    <property type="match status" value="1"/>
</dbReference>
<dbReference type="Gene3D" id="1.20.5.50">
    <property type="match status" value="1"/>
</dbReference>
<dbReference type="Gene3D" id="3.30.160.880">
    <property type="entry name" value="Cell division protein ZapA protomer, N-terminal domain"/>
    <property type="match status" value="1"/>
</dbReference>
<dbReference type="HAMAP" id="MF_02012">
    <property type="entry name" value="ZapA_type1"/>
    <property type="match status" value="1"/>
</dbReference>
<dbReference type="InterPro" id="IPR007838">
    <property type="entry name" value="Cell_div_ZapA-like"/>
</dbReference>
<dbReference type="InterPro" id="IPR036192">
    <property type="entry name" value="Cell_div_ZapA-like_sf"/>
</dbReference>
<dbReference type="InterPro" id="IPR023771">
    <property type="entry name" value="Cell_div_ZapA_eubact"/>
</dbReference>
<dbReference type="InterPro" id="IPR042233">
    <property type="entry name" value="Cell_div_ZapA_N"/>
</dbReference>
<dbReference type="NCBIfam" id="NF008209">
    <property type="entry name" value="PRK10972.1"/>
    <property type="match status" value="1"/>
</dbReference>
<dbReference type="PANTHER" id="PTHR34981">
    <property type="entry name" value="CELL DIVISION PROTEIN ZAPA"/>
    <property type="match status" value="1"/>
</dbReference>
<dbReference type="PANTHER" id="PTHR34981:SF1">
    <property type="entry name" value="CELL DIVISION PROTEIN ZAPA"/>
    <property type="match status" value="1"/>
</dbReference>
<dbReference type="Pfam" id="PF05164">
    <property type="entry name" value="ZapA"/>
    <property type="match status" value="1"/>
</dbReference>
<dbReference type="SUPFAM" id="SSF102829">
    <property type="entry name" value="Cell division protein ZapA-like"/>
    <property type="match status" value="1"/>
</dbReference>
<gene>
    <name evidence="1" type="primary">zapA</name>
    <name type="ordered locus">YPTS_3319</name>
</gene>
<comment type="function">
    <text evidence="1">Activator of cell division through the inhibition of FtsZ GTPase activity, therefore promoting FtsZ assembly into bundles of protofilaments necessary for the formation of the division Z ring. It is recruited early at mid-cell but it is not essential for cell division.</text>
</comment>
<comment type="subunit">
    <text evidence="1">Homodimer. Interacts with FtsZ.</text>
</comment>
<comment type="subcellular location">
    <subcellularLocation>
        <location evidence="1">Cytoplasm</location>
    </subcellularLocation>
    <text evidence="1">Localizes at mid-cell.</text>
</comment>
<comment type="similarity">
    <text evidence="1">Belongs to the ZapA family. Type 1 subfamily.</text>
</comment>
<reference key="1">
    <citation type="submission" date="2008-04" db="EMBL/GenBank/DDBJ databases">
        <title>Complete sequence of Yersinia pseudotuberculosis PB1/+.</title>
        <authorList>
            <person name="Copeland A."/>
            <person name="Lucas S."/>
            <person name="Lapidus A."/>
            <person name="Glavina del Rio T."/>
            <person name="Dalin E."/>
            <person name="Tice H."/>
            <person name="Bruce D."/>
            <person name="Goodwin L."/>
            <person name="Pitluck S."/>
            <person name="Munk A.C."/>
            <person name="Brettin T."/>
            <person name="Detter J.C."/>
            <person name="Han C."/>
            <person name="Tapia R."/>
            <person name="Schmutz J."/>
            <person name="Larimer F."/>
            <person name="Land M."/>
            <person name="Hauser L."/>
            <person name="Challacombe J.F."/>
            <person name="Green L."/>
            <person name="Lindler L.E."/>
            <person name="Nikolich M.P."/>
            <person name="Richardson P."/>
        </authorList>
    </citation>
    <scope>NUCLEOTIDE SEQUENCE [LARGE SCALE GENOMIC DNA]</scope>
    <source>
        <strain>PB1/+</strain>
    </source>
</reference>
<accession>B2K0R1</accession>
<sequence>MSAQPVDIQVFGRSLRVNCPPEQQDALNMAAEDLSQRLQDLKVRTRVNNTEQLVFIAALNVCHELAQERLKTRDYASNMEQRIRMLQQTIEQALLEQGRISDRQDTQFE</sequence>
<protein>
    <recommendedName>
        <fullName evidence="1">Cell division protein ZapA</fullName>
    </recommendedName>
    <alternativeName>
        <fullName evidence="1">Z ring-associated protein ZapA</fullName>
    </alternativeName>
</protein>
<proteinExistence type="inferred from homology"/>
<name>ZAPA_YERPB</name>
<evidence type="ECO:0000255" key="1">
    <source>
        <dbReference type="HAMAP-Rule" id="MF_02012"/>
    </source>
</evidence>
<keyword id="KW-0131">Cell cycle</keyword>
<keyword id="KW-0132">Cell division</keyword>
<keyword id="KW-0175">Coiled coil</keyword>
<keyword id="KW-0963">Cytoplasm</keyword>
<keyword id="KW-0717">Septation</keyword>
<feature type="chain" id="PRO_0000345671" description="Cell division protein ZapA">
    <location>
        <begin position="1"/>
        <end position="109"/>
    </location>
</feature>
<feature type="coiled-coil region" evidence="1">
    <location>
        <begin position="22"/>
        <end position="99"/>
    </location>
</feature>
<organism>
    <name type="scientific">Yersinia pseudotuberculosis serotype IB (strain PB1/+)</name>
    <dbReference type="NCBI Taxonomy" id="502801"/>
    <lineage>
        <taxon>Bacteria</taxon>
        <taxon>Pseudomonadati</taxon>
        <taxon>Pseudomonadota</taxon>
        <taxon>Gammaproteobacteria</taxon>
        <taxon>Enterobacterales</taxon>
        <taxon>Yersiniaceae</taxon>
        <taxon>Yersinia</taxon>
    </lineage>
</organism>